<sequence length="136" mass="15042">MKISLRAGERIYINGAVLRVDRKVSVELVNDVMFLLEGQIMQASDATTAMRQLYFIVQLMLMNPTDVRDASALYGQHHAALVAVCESREMLDGLVAIDELVGATRYFEALKRIRALFPVEQAILAGVATDIPFEAA</sequence>
<dbReference type="EMBL" id="BA000040">
    <property type="protein sequence ID" value="BAC52119.1"/>
    <property type="molecule type" value="Genomic_DNA"/>
</dbReference>
<dbReference type="RefSeq" id="NP_773494.1">
    <property type="nucleotide sequence ID" value="NC_004463.1"/>
</dbReference>
<dbReference type="RefSeq" id="WP_011089592.1">
    <property type="nucleotide sequence ID" value="NC_004463.1"/>
</dbReference>
<dbReference type="SMR" id="Q89F47"/>
<dbReference type="STRING" id="224911.AAV28_31860"/>
<dbReference type="EnsemblBacteria" id="BAC52119">
    <property type="protein sequence ID" value="BAC52119"/>
    <property type="gene ID" value="BAC52119"/>
</dbReference>
<dbReference type="GeneID" id="46493824"/>
<dbReference type="KEGG" id="bja:bll6854"/>
<dbReference type="PATRIC" id="fig|224911.44.peg.6884"/>
<dbReference type="eggNOG" id="COG5443">
    <property type="taxonomic scope" value="Bacteria"/>
</dbReference>
<dbReference type="HOGENOM" id="CLU_130913_1_0_5"/>
<dbReference type="InParanoid" id="Q89F47"/>
<dbReference type="OrthoDB" id="7932924at2"/>
<dbReference type="PhylomeDB" id="Q89F47"/>
<dbReference type="Proteomes" id="UP000002526">
    <property type="component" value="Chromosome"/>
</dbReference>
<dbReference type="GO" id="GO:0048027">
    <property type="term" value="F:mRNA 5'-UTR binding"/>
    <property type="evidence" value="ECO:0007669"/>
    <property type="project" value="UniProtKB-UniRule"/>
</dbReference>
<dbReference type="GO" id="GO:0044781">
    <property type="term" value="P:bacterial-type flagellum organization"/>
    <property type="evidence" value="ECO:0007669"/>
    <property type="project" value="UniProtKB-KW"/>
</dbReference>
<dbReference type="GO" id="GO:0006402">
    <property type="term" value="P:mRNA catabolic process"/>
    <property type="evidence" value="ECO:0007669"/>
    <property type="project" value="InterPro"/>
</dbReference>
<dbReference type="GO" id="GO:1902209">
    <property type="term" value="P:negative regulation of bacterial-type flagellum assembly"/>
    <property type="evidence" value="ECO:0007669"/>
    <property type="project" value="UniProtKB-UniRule"/>
</dbReference>
<dbReference type="HAMAP" id="MF_00783">
    <property type="entry name" value="FlbT"/>
    <property type="match status" value="1"/>
</dbReference>
<dbReference type="InterPro" id="IPR009967">
    <property type="entry name" value="Flagellum_FlbT"/>
</dbReference>
<dbReference type="NCBIfam" id="NF001995">
    <property type="entry name" value="PRK00794.1-1"/>
    <property type="match status" value="1"/>
</dbReference>
<dbReference type="Pfam" id="PF07378">
    <property type="entry name" value="FlbT"/>
    <property type="match status" value="1"/>
</dbReference>
<dbReference type="PIRSF" id="PIRSF009533">
    <property type="entry name" value="FlbT"/>
    <property type="match status" value="1"/>
</dbReference>
<evidence type="ECO:0000255" key="1">
    <source>
        <dbReference type="HAMAP-Rule" id="MF_00783"/>
    </source>
</evidence>
<protein>
    <recommendedName>
        <fullName evidence="1">Probable flagellum biosynthesis repressor protein FlbT 2</fullName>
    </recommendedName>
</protein>
<proteinExistence type="inferred from homology"/>
<organism>
    <name type="scientific">Bradyrhizobium diazoefficiens (strain JCM 10833 / BCRC 13528 / IAM 13628 / NBRC 14792 / USDA 110)</name>
    <dbReference type="NCBI Taxonomy" id="224911"/>
    <lineage>
        <taxon>Bacteria</taxon>
        <taxon>Pseudomonadati</taxon>
        <taxon>Pseudomonadota</taxon>
        <taxon>Alphaproteobacteria</taxon>
        <taxon>Hyphomicrobiales</taxon>
        <taxon>Nitrobacteraceae</taxon>
        <taxon>Bradyrhizobium</taxon>
    </lineage>
</organism>
<gene>
    <name evidence="1" type="primary">flbT2</name>
    <name type="ordered locus">bll6854</name>
</gene>
<name>FLBT2_BRADU</name>
<feature type="chain" id="PRO_0000217152" description="Probable flagellum biosynthesis repressor protein FlbT 2">
    <location>
        <begin position="1"/>
        <end position="136"/>
    </location>
</feature>
<comment type="function">
    <text evidence="1">Has a post-transcriptional repressor function in flagellum biogenesis. Associates with the 5'-UTR of fljK mRNA and promotes its degradation.</text>
</comment>
<comment type="similarity">
    <text evidence="1">Belongs to the FlbT family.</text>
</comment>
<keyword id="KW-1005">Bacterial flagellum biogenesis</keyword>
<keyword id="KW-1185">Reference proteome</keyword>
<keyword id="KW-0678">Repressor</keyword>
<keyword id="KW-0694">RNA-binding</keyword>
<reference key="1">
    <citation type="journal article" date="2002" name="DNA Res.">
        <title>Complete genomic sequence of nitrogen-fixing symbiotic bacterium Bradyrhizobium japonicum USDA110.</title>
        <authorList>
            <person name="Kaneko T."/>
            <person name="Nakamura Y."/>
            <person name="Sato S."/>
            <person name="Minamisawa K."/>
            <person name="Uchiumi T."/>
            <person name="Sasamoto S."/>
            <person name="Watanabe A."/>
            <person name="Idesawa K."/>
            <person name="Iriguchi M."/>
            <person name="Kawashima K."/>
            <person name="Kohara M."/>
            <person name="Matsumoto M."/>
            <person name="Shimpo S."/>
            <person name="Tsuruoka H."/>
            <person name="Wada T."/>
            <person name="Yamada M."/>
            <person name="Tabata S."/>
        </authorList>
    </citation>
    <scope>NUCLEOTIDE SEQUENCE [LARGE SCALE GENOMIC DNA]</scope>
    <source>
        <strain>JCM 10833 / BCRC 13528 / IAM 13628 / NBRC 14792 / USDA 110</strain>
    </source>
</reference>
<accession>Q89F47</accession>